<keyword id="KW-0002">3D-structure</keyword>
<keyword id="KW-0273">Eye lens protein</keyword>
<keyword id="KW-1185">Reference proteome</keyword>
<keyword id="KW-0677">Repeat</keyword>
<dbReference type="EMBL" id="M19359">
    <property type="protein sequence ID" value="AAA40985.1"/>
    <property type="molecule type" value="Genomic_DNA"/>
</dbReference>
<dbReference type="EMBL" id="J00716">
    <property type="protein sequence ID" value="AAA40987.1"/>
    <property type="molecule type" value="mRNA"/>
</dbReference>
<dbReference type="EMBL" id="X00271">
    <property type="protein sequence ID" value="CAA25073.1"/>
    <property type="molecule type" value="Genomic_DNA"/>
</dbReference>
<dbReference type="PIR" id="A02930">
    <property type="entry name" value="CYRTG1"/>
</dbReference>
<dbReference type="PIR" id="I49617">
    <property type="entry name" value="I49617"/>
</dbReference>
<dbReference type="PIR" id="I56381">
    <property type="entry name" value="I56381"/>
</dbReference>
<dbReference type="RefSeq" id="NP_775411.1">
    <property type="nucleotide sequence ID" value="NM_173289.1"/>
</dbReference>
<dbReference type="PDB" id="1A5D">
    <property type="method" value="X-ray"/>
    <property type="resolution" value="2.30 A"/>
    <property type="chains" value="A/B=2-174"/>
</dbReference>
<dbReference type="PDB" id="1ZGT">
    <property type="method" value="X-ray"/>
    <property type="resolution" value="1.45 A"/>
    <property type="chains" value="A=2-174"/>
</dbReference>
<dbReference type="PDB" id="1ZIE">
    <property type="method" value="X-ray"/>
    <property type="resolution" value="1.44 A"/>
    <property type="chains" value="A=2-174"/>
</dbReference>
<dbReference type="PDB" id="1ZIQ">
    <property type="method" value="X-ray"/>
    <property type="resolution" value="1.72 A"/>
    <property type="chains" value="A=2-174"/>
</dbReference>
<dbReference type="PDB" id="1ZIR">
    <property type="method" value="X-ray"/>
    <property type="resolution" value="1.36 A"/>
    <property type="chains" value="A=2-174"/>
</dbReference>
<dbReference type="PDBsum" id="1A5D"/>
<dbReference type="PDBsum" id="1ZGT"/>
<dbReference type="PDBsum" id="1ZIE"/>
<dbReference type="PDBsum" id="1ZIQ"/>
<dbReference type="PDBsum" id="1ZIR"/>
<dbReference type="SMR" id="P02528"/>
<dbReference type="FunCoup" id="P02528">
    <property type="interactions" value="6"/>
</dbReference>
<dbReference type="GeneID" id="24279"/>
<dbReference type="KEGG" id="rno:24279"/>
<dbReference type="UCSC" id="RGD:2423">
    <property type="organism name" value="rat"/>
</dbReference>
<dbReference type="AGR" id="RGD:2423"/>
<dbReference type="CTD" id="12968"/>
<dbReference type="RGD" id="2423">
    <property type="gene designation" value="Cryge"/>
</dbReference>
<dbReference type="InParanoid" id="P02528"/>
<dbReference type="OrthoDB" id="521at9989"/>
<dbReference type="PhylomeDB" id="P02528"/>
<dbReference type="EvolutionaryTrace" id="P02528"/>
<dbReference type="PRO" id="PR:P02528"/>
<dbReference type="Proteomes" id="UP000002494">
    <property type="component" value="Unplaced"/>
</dbReference>
<dbReference type="GO" id="GO:0005212">
    <property type="term" value="F:structural constituent of eye lens"/>
    <property type="evidence" value="ECO:0000318"/>
    <property type="project" value="GO_Central"/>
</dbReference>
<dbReference type="GO" id="GO:0002088">
    <property type="term" value="P:lens development in camera-type eye"/>
    <property type="evidence" value="ECO:0000270"/>
    <property type="project" value="RGD"/>
</dbReference>
<dbReference type="GO" id="GO:0007601">
    <property type="term" value="P:visual perception"/>
    <property type="evidence" value="ECO:0000318"/>
    <property type="project" value="GO_Central"/>
</dbReference>
<dbReference type="FunFam" id="2.60.20.10:FF:000001">
    <property type="entry name" value="Crystallin gamma S"/>
    <property type="match status" value="1"/>
</dbReference>
<dbReference type="FunFam" id="2.60.20.10:FF:000003">
    <property type="entry name" value="Crystallin gamma S"/>
    <property type="match status" value="1"/>
</dbReference>
<dbReference type="Gene3D" id="2.60.20.10">
    <property type="entry name" value="Crystallins"/>
    <property type="match status" value="2"/>
</dbReference>
<dbReference type="InterPro" id="IPR050252">
    <property type="entry name" value="Beta/Gamma-Crystallin"/>
</dbReference>
<dbReference type="InterPro" id="IPR001064">
    <property type="entry name" value="Beta/gamma_crystallin"/>
</dbReference>
<dbReference type="InterPro" id="IPR011024">
    <property type="entry name" value="G_crystallin-like"/>
</dbReference>
<dbReference type="PANTHER" id="PTHR11818">
    <property type="entry name" value="BETA/GAMMA CRYSTALLIN"/>
    <property type="match status" value="1"/>
</dbReference>
<dbReference type="PANTHER" id="PTHR11818:SF125">
    <property type="entry name" value="GAMMA-CRYSTALLIN E-RELATED"/>
    <property type="match status" value="1"/>
</dbReference>
<dbReference type="Pfam" id="PF00030">
    <property type="entry name" value="Crystall"/>
    <property type="match status" value="2"/>
</dbReference>
<dbReference type="PRINTS" id="PR01367">
    <property type="entry name" value="BGCRYSTALLIN"/>
</dbReference>
<dbReference type="SMART" id="SM00247">
    <property type="entry name" value="XTALbg"/>
    <property type="match status" value="2"/>
</dbReference>
<dbReference type="SUPFAM" id="SSF49695">
    <property type="entry name" value="gamma-Crystallin-like"/>
    <property type="match status" value="1"/>
</dbReference>
<dbReference type="PROSITE" id="PS50915">
    <property type="entry name" value="CRYSTALLIN_BETA_GAMMA"/>
    <property type="match status" value="4"/>
</dbReference>
<gene>
    <name type="primary">Cryge</name>
</gene>
<comment type="function">
    <text>Crystallins are the dominant structural components of the vertebrate eye lens.</text>
</comment>
<comment type="tissue specificity">
    <text evidence="2">Detected in the superior olivary complex and fibers of the ventral aoustic stria of the auditory hindbrain.</text>
</comment>
<comment type="domain">
    <text>Has a two-domain beta-structure, folded into four very similar Greek key motifs.</text>
</comment>
<comment type="miscellaneous">
    <text>There are six different gamma crystallins identified in rat lens.</text>
</comment>
<comment type="similarity">
    <text evidence="3">Belongs to the beta/gamma-crystallin family.</text>
</comment>
<protein>
    <recommendedName>
        <fullName>Gamma-crystallin E</fullName>
    </recommendedName>
    <alternativeName>
        <fullName>Gamma-2</fullName>
    </alternativeName>
    <alternativeName>
        <fullName>Gamma-E-crystallin</fullName>
    </alternativeName>
    <alternativeName>
        <fullName>Gamma-crystallin 3-1</fullName>
    </alternativeName>
</protein>
<evidence type="ECO:0000255" key="1">
    <source>
        <dbReference type="PROSITE-ProRule" id="PRU00028"/>
    </source>
</evidence>
<evidence type="ECO:0000269" key="2">
    <source>
    </source>
</evidence>
<evidence type="ECO:0000305" key="3"/>
<evidence type="ECO:0007829" key="4">
    <source>
        <dbReference type="PDB" id="1ZIR"/>
    </source>
</evidence>
<feature type="chain" id="PRO_0000057593" description="Gamma-crystallin E">
    <location>
        <begin position="1"/>
        <end position="174"/>
    </location>
</feature>
<feature type="domain" description="Beta/gamma crystallin 'Greek key' 1" evidence="1">
    <location>
        <begin position="2"/>
        <end position="40"/>
    </location>
</feature>
<feature type="domain" description="Beta/gamma crystallin 'Greek key' 2" evidence="1">
    <location>
        <begin position="41"/>
        <end position="83"/>
    </location>
</feature>
<feature type="domain" description="Beta/gamma crystallin 'Greek key' 3" evidence="1">
    <location>
        <begin position="88"/>
        <end position="128"/>
    </location>
</feature>
<feature type="domain" description="Beta/gamma crystallin 'Greek key' 4" evidence="1">
    <location>
        <begin position="129"/>
        <end position="171"/>
    </location>
</feature>
<feature type="region of interest" description="Connecting peptide">
    <location>
        <begin position="84"/>
        <end position="87"/>
    </location>
</feature>
<feature type="strand" evidence="4">
    <location>
        <begin position="3"/>
        <end position="9"/>
    </location>
</feature>
<feature type="helix" evidence="4">
    <location>
        <begin position="10"/>
        <end position="12"/>
    </location>
</feature>
<feature type="strand" evidence="4">
    <location>
        <begin position="13"/>
        <end position="19"/>
    </location>
</feature>
<feature type="turn" evidence="4">
    <location>
        <begin position="27"/>
        <end position="29"/>
    </location>
</feature>
<feature type="strand" evidence="4">
    <location>
        <begin position="34"/>
        <end position="48"/>
    </location>
</feature>
<feature type="turn" evidence="4">
    <location>
        <begin position="49"/>
        <end position="51"/>
    </location>
</feature>
<feature type="strand" evidence="4">
    <location>
        <begin position="52"/>
        <end position="58"/>
    </location>
</feature>
<feature type="strand" evidence="4">
    <location>
        <begin position="60"/>
        <end position="65"/>
    </location>
</feature>
<feature type="helix" evidence="4">
    <location>
        <begin position="66"/>
        <end position="69"/>
    </location>
</feature>
<feature type="strand" evidence="4">
    <location>
        <begin position="72"/>
        <end position="74"/>
    </location>
</feature>
<feature type="strand" evidence="4">
    <location>
        <begin position="78"/>
        <end position="82"/>
    </location>
</feature>
<feature type="strand" evidence="4">
    <location>
        <begin position="89"/>
        <end position="95"/>
    </location>
</feature>
<feature type="helix" evidence="4">
    <location>
        <begin position="96"/>
        <end position="98"/>
    </location>
</feature>
<feature type="strand" evidence="4">
    <location>
        <begin position="99"/>
        <end position="107"/>
    </location>
</feature>
<feature type="helix" evidence="4">
    <location>
        <begin position="112"/>
        <end position="115"/>
    </location>
</feature>
<feature type="strand" evidence="4">
    <location>
        <begin position="123"/>
        <end position="129"/>
    </location>
</feature>
<feature type="strand" evidence="4">
    <location>
        <begin position="131"/>
        <end position="136"/>
    </location>
</feature>
<feature type="turn" evidence="4">
    <location>
        <begin position="137"/>
        <end position="139"/>
    </location>
</feature>
<feature type="strand" evidence="4">
    <location>
        <begin position="140"/>
        <end position="146"/>
    </location>
</feature>
<feature type="strand" evidence="4">
    <location>
        <begin position="148"/>
        <end position="151"/>
    </location>
</feature>
<feature type="helix" evidence="4">
    <location>
        <begin position="154"/>
        <end position="157"/>
    </location>
</feature>
<feature type="strand" evidence="4">
    <location>
        <begin position="166"/>
        <end position="169"/>
    </location>
</feature>
<sequence>MGKITFYEDRGFQGRHYECSTDHSNLQPYFSRCNSVRVDSGCWMLYEQPNFTGCQYFLRRGDYPDYQQWMGFSDSVRSCRLIPHSSSHRIRIYEREDYRGQMVEITDDCPHLQDRFHFSDFHSFHVMEGYWVLYEMPNYRGRQYLLRPGEYRRYHDWGAMNARVGSLRRIMDFY</sequence>
<organism>
    <name type="scientific">Rattus norvegicus</name>
    <name type="common">Rat</name>
    <dbReference type="NCBI Taxonomy" id="10116"/>
    <lineage>
        <taxon>Eukaryota</taxon>
        <taxon>Metazoa</taxon>
        <taxon>Chordata</taxon>
        <taxon>Craniata</taxon>
        <taxon>Vertebrata</taxon>
        <taxon>Euteleostomi</taxon>
        <taxon>Mammalia</taxon>
        <taxon>Eutheria</taxon>
        <taxon>Euarchontoglires</taxon>
        <taxon>Glires</taxon>
        <taxon>Rodentia</taxon>
        <taxon>Myomorpha</taxon>
        <taxon>Muroidea</taxon>
        <taxon>Muridae</taxon>
        <taxon>Murinae</taxon>
        <taxon>Rattus</taxon>
    </lineage>
</organism>
<proteinExistence type="evidence at protein level"/>
<accession>P02528</accession>
<reference key="1">
    <citation type="journal article" date="1982" name="Proc. Natl. Acad. Sci. U.S.A.">
        <title>Extensive intragenic sequence homology in two distinct rat lens gamma-crystallin cDNAs suggests duplications of a primordial gene.</title>
        <authorList>
            <person name="Moormann R.J.M."/>
            <person name="den Dunnen J.T."/>
            <person name="Bloemendal H."/>
            <person name="Schoenmakers J.G.G."/>
        </authorList>
    </citation>
    <scope>NUCLEOTIDE SEQUENCE [MRNA]</scope>
</reference>
<reference key="2">
    <citation type="journal article" date="1989" name="Gene">
        <title>Nucleotide sequence of the rat gamma-crystallin gene region and comparison with an orthologous human region.</title>
        <authorList>
            <person name="den Dunnen J.T."/>
            <person name="van Neck J.W."/>
            <person name="Cremers F.P.M."/>
            <person name="Lubsen N.H."/>
            <person name="Schoenmakers J.G.G."/>
        </authorList>
    </citation>
    <scope>NUCLEOTIDE SEQUENCE [GENOMIC DNA]</scope>
</reference>
<reference key="3">
    <citation type="journal article" date="1983" name="J. Mol. Biol.">
        <title>Strict co-linearity of genetic and protein folding domains in an intragenically duplicated rat lens gamma-crystallin gene.</title>
        <authorList>
            <person name="Moormann R.J.M."/>
            <person name="den Dunnen J.T."/>
            <person name="Mulleners L."/>
            <person name="Andreoli P."/>
            <person name="Bloemendal H."/>
            <person name="Schoenmakers J.G.G."/>
        </authorList>
    </citation>
    <scope>NUCLEOTIDE SEQUENCE [GENOMIC DNA]</scope>
</reference>
<reference key="4">
    <citation type="journal article" date="2016" name="PLoS ONE">
        <title>Functional Role of gamma-Crystallin N in the Auditory Hindbrain.</title>
        <authorList>
            <person name="Hartwich H."/>
            <person name="Rosengauer E."/>
            <person name="Ruettiger L."/>
            <person name="Wilms V."/>
            <person name="Waterholter S.K."/>
            <person name="Nothwang H.G."/>
        </authorList>
    </citation>
    <scope>TISSUE SPECIFICITY</scope>
</reference>
<reference key="5">
    <citation type="journal article" date="1997" name="Exp. Eye Res.">
        <title>Towards a molecular understanding of phase separation in the lens: a comparison of the X-ray structures of two high Tc gamma-crystallins, gammaE and gammaF, with two low Tc gamma-crystallins, gammaB and gammaD.</title>
        <authorList>
            <person name="Norledge B.V."/>
            <person name="Hay R.E."/>
            <person name="Bateman O.A."/>
            <person name="Slingsby C."/>
            <person name="Driessen H.P.C."/>
        </authorList>
    </citation>
    <scope>X-RAY CRYSTALLOGRAPHY (2.3 ANGSTROMS)</scope>
    <source>
        <tissue>Lens</tissue>
    </source>
</reference>
<name>CRGE_RAT</name>